<name>HIS6_MYCBT</name>
<organism>
    <name type="scientific">Mycobacterium bovis (strain BCG / Tokyo 172 / ATCC 35737 / TMC 1019)</name>
    <dbReference type="NCBI Taxonomy" id="561275"/>
    <lineage>
        <taxon>Bacteria</taxon>
        <taxon>Bacillati</taxon>
        <taxon>Actinomycetota</taxon>
        <taxon>Actinomycetes</taxon>
        <taxon>Mycobacteriales</taxon>
        <taxon>Mycobacteriaceae</taxon>
        <taxon>Mycobacterium</taxon>
        <taxon>Mycobacterium tuberculosis complex</taxon>
    </lineage>
</organism>
<dbReference type="EC" id="4.3.2.10" evidence="1"/>
<dbReference type="EMBL" id="AP010918">
    <property type="protein sequence ID" value="BAH25906.1"/>
    <property type="molecule type" value="Genomic_DNA"/>
</dbReference>
<dbReference type="RefSeq" id="WP_003407959.1">
    <property type="nucleotide sequence ID" value="NZ_CP014566.1"/>
</dbReference>
<dbReference type="SMR" id="C1ANM7"/>
<dbReference type="KEGG" id="mbt:JTY_1618"/>
<dbReference type="HOGENOM" id="CLU_048577_4_0_11"/>
<dbReference type="UniPathway" id="UPA00031">
    <property type="reaction ID" value="UER00010"/>
</dbReference>
<dbReference type="GO" id="GO:0005737">
    <property type="term" value="C:cytoplasm"/>
    <property type="evidence" value="ECO:0007669"/>
    <property type="project" value="UniProtKB-SubCell"/>
</dbReference>
<dbReference type="GO" id="GO:0000107">
    <property type="term" value="F:imidazoleglycerol-phosphate synthase activity"/>
    <property type="evidence" value="ECO:0007669"/>
    <property type="project" value="UniProtKB-UniRule"/>
</dbReference>
<dbReference type="GO" id="GO:0016829">
    <property type="term" value="F:lyase activity"/>
    <property type="evidence" value="ECO:0007669"/>
    <property type="project" value="UniProtKB-KW"/>
</dbReference>
<dbReference type="GO" id="GO:0000105">
    <property type="term" value="P:L-histidine biosynthetic process"/>
    <property type="evidence" value="ECO:0007669"/>
    <property type="project" value="UniProtKB-UniRule"/>
</dbReference>
<dbReference type="CDD" id="cd04731">
    <property type="entry name" value="HisF"/>
    <property type="match status" value="1"/>
</dbReference>
<dbReference type="FunFam" id="3.20.20.70:FF:000006">
    <property type="entry name" value="Imidazole glycerol phosphate synthase subunit HisF"/>
    <property type="match status" value="1"/>
</dbReference>
<dbReference type="Gene3D" id="3.20.20.70">
    <property type="entry name" value="Aldolase class I"/>
    <property type="match status" value="1"/>
</dbReference>
<dbReference type="HAMAP" id="MF_01013">
    <property type="entry name" value="HisF"/>
    <property type="match status" value="1"/>
</dbReference>
<dbReference type="InterPro" id="IPR013785">
    <property type="entry name" value="Aldolase_TIM"/>
</dbReference>
<dbReference type="InterPro" id="IPR006062">
    <property type="entry name" value="His_biosynth"/>
</dbReference>
<dbReference type="InterPro" id="IPR004651">
    <property type="entry name" value="HisF"/>
</dbReference>
<dbReference type="InterPro" id="IPR050064">
    <property type="entry name" value="IGPS_HisA/HisF"/>
</dbReference>
<dbReference type="InterPro" id="IPR011060">
    <property type="entry name" value="RibuloseP-bd_barrel"/>
</dbReference>
<dbReference type="NCBIfam" id="TIGR00735">
    <property type="entry name" value="hisF"/>
    <property type="match status" value="1"/>
</dbReference>
<dbReference type="PANTHER" id="PTHR21235:SF2">
    <property type="entry name" value="IMIDAZOLE GLYCEROL PHOSPHATE SYNTHASE HISHF"/>
    <property type="match status" value="1"/>
</dbReference>
<dbReference type="PANTHER" id="PTHR21235">
    <property type="entry name" value="IMIDAZOLE GLYCEROL PHOSPHATE SYNTHASE SUBUNIT HISF/H IGP SYNTHASE SUBUNIT HISF/H"/>
    <property type="match status" value="1"/>
</dbReference>
<dbReference type="Pfam" id="PF00977">
    <property type="entry name" value="His_biosynth"/>
    <property type="match status" value="1"/>
</dbReference>
<dbReference type="SUPFAM" id="SSF51366">
    <property type="entry name" value="Ribulose-phoshate binding barrel"/>
    <property type="match status" value="1"/>
</dbReference>
<reference key="1">
    <citation type="journal article" date="2009" name="Vaccine">
        <title>Whole genome sequence analysis of Mycobacterium bovis bacillus Calmette-Guerin (BCG) Tokyo 172: a comparative study of BCG vaccine substrains.</title>
        <authorList>
            <person name="Seki M."/>
            <person name="Honda I."/>
            <person name="Fujita I."/>
            <person name="Yano I."/>
            <person name="Yamamoto S."/>
            <person name="Koyama A."/>
        </authorList>
    </citation>
    <scope>NUCLEOTIDE SEQUENCE [LARGE SCALE GENOMIC DNA]</scope>
    <source>
        <strain>BCG / Tokyo 172 / ATCC 35737 / TMC 1019</strain>
    </source>
</reference>
<protein>
    <recommendedName>
        <fullName evidence="1">Imidazole glycerol phosphate synthase subunit HisF</fullName>
        <ecNumber evidence="1">4.3.2.10</ecNumber>
    </recommendedName>
    <alternativeName>
        <fullName evidence="1">IGP synthase cyclase subunit</fullName>
    </alternativeName>
    <alternativeName>
        <fullName evidence="1">IGP synthase subunit HisF</fullName>
    </alternativeName>
    <alternativeName>
        <fullName evidence="1">ImGP synthase subunit HisF</fullName>
        <shortName evidence="1">IGPS subunit HisF</shortName>
    </alternativeName>
</protein>
<comment type="function">
    <text evidence="1">IGPS catalyzes the conversion of PRFAR and glutamine to IGP, AICAR and glutamate. The HisF subunit catalyzes the cyclization activity that produces IGP and AICAR from PRFAR using the ammonia provided by the HisH subunit.</text>
</comment>
<comment type="catalytic activity">
    <reaction evidence="1">
        <text>5-[(5-phospho-1-deoxy-D-ribulos-1-ylimino)methylamino]-1-(5-phospho-beta-D-ribosyl)imidazole-4-carboxamide + L-glutamine = D-erythro-1-(imidazol-4-yl)glycerol 3-phosphate + 5-amino-1-(5-phospho-beta-D-ribosyl)imidazole-4-carboxamide + L-glutamate + H(+)</text>
        <dbReference type="Rhea" id="RHEA:24793"/>
        <dbReference type="ChEBI" id="CHEBI:15378"/>
        <dbReference type="ChEBI" id="CHEBI:29985"/>
        <dbReference type="ChEBI" id="CHEBI:58278"/>
        <dbReference type="ChEBI" id="CHEBI:58359"/>
        <dbReference type="ChEBI" id="CHEBI:58475"/>
        <dbReference type="ChEBI" id="CHEBI:58525"/>
        <dbReference type="EC" id="4.3.2.10"/>
    </reaction>
</comment>
<comment type="pathway">
    <text evidence="1">Amino-acid biosynthesis; L-histidine biosynthesis; L-histidine from 5-phospho-alpha-D-ribose 1-diphosphate: step 5/9.</text>
</comment>
<comment type="subunit">
    <text evidence="1">Heterodimer of HisH and HisF.</text>
</comment>
<comment type="subcellular location">
    <subcellularLocation>
        <location evidence="1">Cytoplasm</location>
    </subcellularLocation>
</comment>
<comment type="similarity">
    <text evidence="1">Belongs to the HisA/HisF family.</text>
</comment>
<evidence type="ECO:0000255" key="1">
    <source>
        <dbReference type="HAMAP-Rule" id="MF_01013"/>
    </source>
</evidence>
<sequence>MYADRDLPGAGGLAVRVIPCLDVDDGRVVKGVNFENLRDAGDPVELAAVYDAEGADELTFLDVTASSSGRATMLEVVRRTAEQVFIPLTVGGGVRTVADVDSLLRAGADKVAVNTAAIACLDLLADMARQFGSQCIVLSVDARTVPVGSAPTPSGWEVTTHGGRRGTGMDAVQWAARGADLGVGEILLNSMDADGTKAGFDLALLRAVRAAVTVPVIASGGAGAVEHFAPAVAAGADAVLAASVFHFRELTIGQVKAALAAEGITVR</sequence>
<keyword id="KW-0028">Amino-acid biosynthesis</keyword>
<keyword id="KW-0963">Cytoplasm</keyword>
<keyword id="KW-0368">Histidine biosynthesis</keyword>
<keyword id="KW-0456">Lyase</keyword>
<feature type="chain" id="PRO_1000148931" description="Imidazole glycerol phosphate synthase subunit HisF">
    <location>
        <begin position="1"/>
        <end position="267"/>
    </location>
</feature>
<feature type="active site" evidence="1">
    <location>
        <position position="22"/>
    </location>
</feature>
<feature type="active site" evidence="1">
    <location>
        <position position="141"/>
    </location>
</feature>
<gene>
    <name evidence="1" type="primary">hisF</name>
    <name type="ordered locus">JTY_1618</name>
</gene>
<proteinExistence type="inferred from homology"/>
<accession>C1ANM7</accession>